<organism>
    <name type="scientific">Salmonella typhimurium (strain LT2 / SGSC1412 / ATCC 700720)</name>
    <dbReference type="NCBI Taxonomy" id="99287"/>
    <lineage>
        <taxon>Bacteria</taxon>
        <taxon>Pseudomonadati</taxon>
        <taxon>Pseudomonadota</taxon>
        <taxon>Gammaproteobacteria</taxon>
        <taxon>Enterobacterales</taxon>
        <taxon>Enterobacteriaceae</taxon>
        <taxon>Salmonella</taxon>
    </lineage>
</organism>
<reference key="1">
    <citation type="journal article" date="2001" name="Nature">
        <title>Complete genome sequence of Salmonella enterica serovar Typhimurium LT2.</title>
        <authorList>
            <person name="McClelland M."/>
            <person name="Sanderson K.E."/>
            <person name="Spieth J."/>
            <person name="Clifton S.W."/>
            <person name="Latreille P."/>
            <person name="Courtney L."/>
            <person name="Porwollik S."/>
            <person name="Ali J."/>
            <person name="Dante M."/>
            <person name="Du F."/>
            <person name="Hou S."/>
            <person name="Layman D."/>
            <person name="Leonard S."/>
            <person name="Nguyen C."/>
            <person name="Scott K."/>
            <person name="Holmes A."/>
            <person name="Grewal N."/>
            <person name="Mulvaney E."/>
            <person name="Ryan E."/>
            <person name="Sun H."/>
            <person name="Florea L."/>
            <person name="Miller W."/>
            <person name="Stoneking T."/>
            <person name="Nhan M."/>
            <person name="Waterston R."/>
            <person name="Wilson R.K."/>
        </authorList>
    </citation>
    <scope>NUCLEOTIDE SEQUENCE [LARGE SCALE GENOMIC DNA]</scope>
    <source>
        <strain>LT2 / SGSC1412 / ATCC 700720</strain>
    </source>
</reference>
<gene>
    <name evidence="2" type="primary">rpsN</name>
    <name type="ordered locus">STM3427</name>
</gene>
<proteinExistence type="inferred from homology"/>
<keyword id="KW-1185">Reference proteome</keyword>
<keyword id="KW-0687">Ribonucleoprotein</keyword>
<keyword id="KW-0689">Ribosomal protein</keyword>
<keyword id="KW-0694">RNA-binding</keyword>
<keyword id="KW-0699">rRNA-binding</keyword>
<sequence>MAKQSMKAREVKRVALADKYFAKRAELKAIISDVNATDEDRWNAVLKLQTLPRDSSPSRQRNRCRQTGRPHAFLRKFGLSRIKVREAAMRGEIPGLKKASW</sequence>
<evidence type="ECO:0000250" key="1"/>
<evidence type="ECO:0000255" key="2">
    <source>
        <dbReference type="HAMAP-Rule" id="MF_00537"/>
    </source>
</evidence>
<evidence type="ECO:0000305" key="3"/>
<dbReference type="EMBL" id="AE006468">
    <property type="protein sequence ID" value="AAL22290.1"/>
    <property type="molecule type" value="Genomic_DNA"/>
</dbReference>
<dbReference type="RefSeq" id="NP_462331.3">
    <property type="nucleotide sequence ID" value="NC_003197.2"/>
</dbReference>
<dbReference type="RefSeq" id="WP_001118932.1">
    <property type="nucleotide sequence ID" value="NC_003197.2"/>
</dbReference>
<dbReference type="SMR" id="P66409"/>
<dbReference type="STRING" id="99287.STM3427"/>
<dbReference type="PaxDb" id="99287-STM3427"/>
<dbReference type="GeneID" id="1254950"/>
<dbReference type="GeneID" id="66757762"/>
<dbReference type="KEGG" id="stm:STM3427"/>
<dbReference type="PATRIC" id="fig|99287.12.peg.3624"/>
<dbReference type="HOGENOM" id="CLU_139869_0_1_6"/>
<dbReference type="PhylomeDB" id="P66409"/>
<dbReference type="BioCyc" id="SENT99287:STM3427-MONOMER"/>
<dbReference type="Proteomes" id="UP000001014">
    <property type="component" value="Chromosome"/>
</dbReference>
<dbReference type="GO" id="GO:0005737">
    <property type="term" value="C:cytoplasm"/>
    <property type="evidence" value="ECO:0007669"/>
    <property type="project" value="UniProtKB-ARBA"/>
</dbReference>
<dbReference type="GO" id="GO:0015935">
    <property type="term" value="C:small ribosomal subunit"/>
    <property type="evidence" value="ECO:0000318"/>
    <property type="project" value="GO_Central"/>
</dbReference>
<dbReference type="GO" id="GO:0019843">
    <property type="term" value="F:rRNA binding"/>
    <property type="evidence" value="ECO:0007669"/>
    <property type="project" value="UniProtKB-UniRule"/>
</dbReference>
<dbReference type="GO" id="GO:0003735">
    <property type="term" value="F:structural constituent of ribosome"/>
    <property type="evidence" value="ECO:0000318"/>
    <property type="project" value="GO_Central"/>
</dbReference>
<dbReference type="GO" id="GO:0006412">
    <property type="term" value="P:translation"/>
    <property type="evidence" value="ECO:0000318"/>
    <property type="project" value="GO_Central"/>
</dbReference>
<dbReference type="FunFam" id="1.10.287.1480:FF:000001">
    <property type="entry name" value="30S ribosomal protein S14"/>
    <property type="match status" value="1"/>
</dbReference>
<dbReference type="Gene3D" id="1.10.287.1480">
    <property type="match status" value="1"/>
</dbReference>
<dbReference type="HAMAP" id="MF_00537">
    <property type="entry name" value="Ribosomal_uS14_1"/>
    <property type="match status" value="1"/>
</dbReference>
<dbReference type="InterPro" id="IPR001209">
    <property type="entry name" value="Ribosomal_uS14"/>
</dbReference>
<dbReference type="InterPro" id="IPR023036">
    <property type="entry name" value="Ribosomal_uS14_bac/plastid"/>
</dbReference>
<dbReference type="InterPro" id="IPR018271">
    <property type="entry name" value="Ribosomal_uS14_CS"/>
</dbReference>
<dbReference type="NCBIfam" id="NF006477">
    <property type="entry name" value="PRK08881.1"/>
    <property type="match status" value="1"/>
</dbReference>
<dbReference type="PANTHER" id="PTHR19836">
    <property type="entry name" value="30S RIBOSOMAL PROTEIN S14"/>
    <property type="match status" value="1"/>
</dbReference>
<dbReference type="PANTHER" id="PTHR19836:SF19">
    <property type="entry name" value="SMALL RIBOSOMAL SUBUNIT PROTEIN US14M"/>
    <property type="match status" value="1"/>
</dbReference>
<dbReference type="Pfam" id="PF00253">
    <property type="entry name" value="Ribosomal_S14"/>
    <property type="match status" value="1"/>
</dbReference>
<dbReference type="SUPFAM" id="SSF57716">
    <property type="entry name" value="Glucocorticoid receptor-like (DNA-binding domain)"/>
    <property type="match status" value="1"/>
</dbReference>
<dbReference type="PROSITE" id="PS00527">
    <property type="entry name" value="RIBOSOMAL_S14"/>
    <property type="match status" value="1"/>
</dbReference>
<feature type="initiator methionine" description="Removed" evidence="1">
    <location>
        <position position="1"/>
    </location>
</feature>
<feature type="chain" id="PRO_0000130923" description="Small ribosomal subunit protein uS14">
    <location>
        <begin position="2"/>
        <end position="101"/>
    </location>
</feature>
<protein>
    <recommendedName>
        <fullName evidence="2">Small ribosomal subunit protein uS14</fullName>
    </recommendedName>
    <alternativeName>
        <fullName evidence="3">30S ribosomal protein S14</fullName>
    </alternativeName>
</protein>
<name>RS14_SALTY</name>
<accession>P66409</accession>
<accession>Q8XEW0</accession>
<comment type="function">
    <text evidence="2">Binds 16S rRNA, required for the assembly of 30S particles and may also be responsible for determining the conformation of the 16S rRNA at the A site.</text>
</comment>
<comment type="subunit">
    <text evidence="2">Part of the 30S ribosomal subunit. Contacts proteins S3 and S10.</text>
</comment>
<comment type="similarity">
    <text evidence="2">Belongs to the universal ribosomal protein uS14 family.</text>
</comment>